<reference key="1">
    <citation type="journal article" date="1997" name="Nature">
        <title>Molecular basis of symbiosis between Rhizobium and legumes.</title>
        <authorList>
            <person name="Freiberg C.A."/>
            <person name="Fellay R."/>
            <person name="Bairoch A."/>
            <person name="Broughton W.J."/>
            <person name="Rosenthal A."/>
            <person name="Perret X."/>
        </authorList>
    </citation>
    <scope>NUCLEOTIDE SEQUENCE [LARGE SCALE GENOMIC DNA]</scope>
    <source>
        <strain>NBRC 101917 / NGR234</strain>
    </source>
</reference>
<reference key="2">
    <citation type="journal article" date="2009" name="Appl. Environ. Microbiol.">
        <title>Rhizobium sp. strain NGR234 possesses a remarkable number of secretion systems.</title>
        <authorList>
            <person name="Schmeisser C."/>
            <person name="Liesegang H."/>
            <person name="Krysciak D."/>
            <person name="Bakkou N."/>
            <person name="Le Quere A."/>
            <person name="Wollherr A."/>
            <person name="Heinemeyer I."/>
            <person name="Morgenstern B."/>
            <person name="Pommerening-Roeser A."/>
            <person name="Flores M."/>
            <person name="Palacios R."/>
            <person name="Brenner S."/>
            <person name="Gottschalk G."/>
            <person name="Schmitz R.A."/>
            <person name="Broughton W.J."/>
            <person name="Perret X."/>
            <person name="Strittmatter A.W."/>
            <person name="Streit W.R."/>
        </authorList>
    </citation>
    <scope>NUCLEOTIDE SEQUENCE [LARGE SCALE GENOMIC DNA]</scope>
    <source>
        <strain>NBRC 101917 / NGR234</strain>
    </source>
</reference>
<sequence>MEIDEDKIDDAVLALLWLTLHNERCAWKGFDWATTDRLHERGLICDPVNKSKSLVLTDEGLRRSEELFRRLFTR</sequence>
<dbReference type="EMBL" id="U00090">
    <property type="protein sequence ID" value="AAB92456.1"/>
    <property type="molecule type" value="Genomic_DNA"/>
</dbReference>
<dbReference type="PIR" id="T10852">
    <property type="entry name" value="T10852"/>
</dbReference>
<dbReference type="RefSeq" id="NP_443894.1">
    <property type="nucleotide sequence ID" value="NC_000914.2"/>
</dbReference>
<dbReference type="RefSeq" id="WP_010875346.1">
    <property type="nucleotide sequence ID" value="NC_000914.2"/>
</dbReference>
<dbReference type="SMR" id="P55482"/>
<dbReference type="KEGG" id="rhi:NGR_a03320"/>
<dbReference type="PATRIC" id="fig|394.7.peg.341"/>
<dbReference type="eggNOG" id="ENOG5032Y36">
    <property type="taxonomic scope" value="Bacteria"/>
</dbReference>
<dbReference type="HOGENOM" id="CLU_175573_1_0_5"/>
<dbReference type="OrthoDB" id="8912983at2"/>
<dbReference type="Proteomes" id="UP000001054">
    <property type="component" value="Plasmid pNGR234a"/>
</dbReference>
<dbReference type="InterPro" id="IPR045489">
    <property type="entry name" value="DUF6429"/>
</dbReference>
<dbReference type="Pfam" id="PF20008">
    <property type="entry name" value="DUF6429"/>
    <property type="match status" value="1"/>
</dbReference>
<protein>
    <recommendedName>
        <fullName>Uncharacterized protein y4hR</fullName>
    </recommendedName>
</protein>
<gene>
    <name type="ordered locus">NGR_a03320</name>
    <name type="ORF">y4hR</name>
</gene>
<organism>
    <name type="scientific">Sinorhizobium fredii (strain NBRC 101917 / NGR234)</name>
    <dbReference type="NCBI Taxonomy" id="394"/>
    <lineage>
        <taxon>Bacteria</taxon>
        <taxon>Pseudomonadati</taxon>
        <taxon>Pseudomonadota</taxon>
        <taxon>Alphaproteobacteria</taxon>
        <taxon>Hyphomicrobiales</taxon>
        <taxon>Rhizobiaceae</taxon>
        <taxon>Sinorhizobium/Ensifer group</taxon>
        <taxon>Sinorhizobium</taxon>
    </lineage>
</organism>
<feature type="chain" id="PRO_0000200855" description="Uncharacterized protein y4hR">
    <location>
        <begin position="1"/>
        <end position="74"/>
    </location>
</feature>
<keyword id="KW-0614">Plasmid</keyword>
<keyword id="KW-1185">Reference proteome</keyword>
<proteinExistence type="predicted"/>
<geneLocation type="plasmid">
    <name>sym pNGR234a</name>
</geneLocation>
<accession>P55482</accession>
<name>Y4HR_SINFN</name>